<reference key="1">
    <citation type="journal article" date="2013" name="Plant Physiol.">
        <title>A Nostoc punctiforme Sugar Transporter Necessary to Establish a Cyanobacterium-Plant Symbiosis.</title>
        <authorList>
            <person name="Ekman M."/>
            <person name="Picossi S."/>
            <person name="Campbell E.L."/>
            <person name="Meeks J.C."/>
            <person name="Flores E."/>
        </authorList>
    </citation>
    <scope>NUCLEOTIDE SEQUENCE [LARGE SCALE GENOMIC DNA]</scope>
    <source>
        <strain>ATCC 29133 / PCC 73102</strain>
    </source>
</reference>
<organism>
    <name type="scientific">Nostoc punctiforme (strain ATCC 29133 / PCC 73102)</name>
    <dbReference type="NCBI Taxonomy" id="63737"/>
    <lineage>
        <taxon>Bacteria</taxon>
        <taxon>Bacillati</taxon>
        <taxon>Cyanobacteriota</taxon>
        <taxon>Cyanophyceae</taxon>
        <taxon>Nostocales</taxon>
        <taxon>Nostocaceae</taxon>
        <taxon>Nostoc</taxon>
    </lineage>
</organism>
<gene>
    <name evidence="1" type="primary">aroA</name>
    <name type="ordered locus">Npun_F1315</name>
</gene>
<name>AROA_NOSP7</name>
<dbReference type="EC" id="2.5.1.19" evidence="1"/>
<dbReference type="EMBL" id="CP001037">
    <property type="protein sequence ID" value="ACC80031.1"/>
    <property type="molecule type" value="Genomic_DNA"/>
</dbReference>
<dbReference type="RefSeq" id="WP_012408052.1">
    <property type="nucleotide sequence ID" value="NC_010628.1"/>
</dbReference>
<dbReference type="SMR" id="B2IYE4"/>
<dbReference type="STRING" id="63737.Npun_F1315"/>
<dbReference type="EnsemblBacteria" id="ACC80031">
    <property type="protein sequence ID" value="ACC80031"/>
    <property type="gene ID" value="Npun_F1315"/>
</dbReference>
<dbReference type="KEGG" id="npu:Npun_F1315"/>
<dbReference type="eggNOG" id="COG0128">
    <property type="taxonomic scope" value="Bacteria"/>
</dbReference>
<dbReference type="HOGENOM" id="CLU_024321_0_0_3"/>
<dbReference type="OrthoDB" id="9809920at2"/>
<dbReference type="PhylomeDB" id="B2IYE4"/>
<dbReference type="BRENDA" id="2.5.1.19">
    <property type="organism ID" value="4370"/>
</dbReference>
<dbReference type="UniPathway" id="UPA00053">
    <property type="reaction ID" value="UER00089"/>
</dbReference>
<dbReference type="Proteomes" id="UP000001191">
    <property type="component" value="Chromosome"/>
</dbReference>
<dbReference type="GO" id="GO:0005737">
    <property type="term" value="C:cytoplasm"/>
    <property type="evidence" value="ECO:0007669"/>
    <property type="project" value="UniProtKB-SubCell"/>
</dbReference>
<dbReference type="GO" id="GO:0003866">
    <property type="term" value="F:3-phosphoshikimate 1-carboxyvinyltransferase activity"/>
    <property type="evidence" value="ECO:0007669"/>
    <property type="project" value="UniProtKB-UniRule"/>
</dbReference>
<dbReference type="GO" id="GO:0008652">
    <property type="term" value="P:amino acid biosynthetic process"/>
    <property type="evidence" value="ECO:0007669"/>
    <property type="project" value="UniProtKB-KW"/>
</dbReference>
<dbReference type="GO" id="GO:0009073">
    <property type="term" value="P:aromatic amino acid family biosynthetic process"/>
    <property type="evidence" value="ECO:0007669"/>
    <property type="project" value="UniProtKB-KW"/>
</dbReference>
<dbReference type="GO" id="GO:0009423">
    <property type="term" value="P:chorismate biosynthetic process"/>
    <property type="evidence" value="ECO:0007669"/>
    <property type="project" value="UniProtKB-UniRule"/>
</dbReference>
<dbReference type="CDD" id="cd01556">
    <property type="entry name" value="EPSP_synthase"/>
    <property type="match status" value="1"/>
</dbReference>
<dbReference type="Gene3D" id="3.65.10.10">
    <property type="entry name" value="Enolpyruvate transferase domain"/>
    <property type="match status" value="2"/>
</dbReference>
<dbReference type="HAMAP" id="MF_00210">
    <property type="entry name" value="EPSP_synth"/>
    <property type="match status" value="1"/>
</dbReference>
<dbReference type="InterPro" id="IPR001986">
    <property type="entry name" value="Enolpyruvate_Tfrase_dom"/>
</dbReference>
<dbReference type="InterPro" id="IPR036968">
    <property type="entry name" value="Enolpyruvate_Tfrase_sf"/>
</dbReference>
<dbReference type="InterPro" id="IPR006264">
    <property type="entry name" value="EPSP_synthase"/>
</dbReference>
<dbReference type="InterPro" id="IPR023193">
    <property type="entry name" value="EPSP_synthase_CS"/>
</dbReference>
<dbReference type="InterPro" id="IPR013792">
    <property type="entry name" value="RNA3'P_cycl/enolpyr_Trfase_a/b"/>
</dbReference>
<dbReference type="NCBIfam" id="TIGR01356">
    <property type="entry name" value="aroA"/>
    <property type="match status" value="1"/>
</dbReference>
<dbReference type="PANTHER" id="PTHR21090">
    <property type="entry name" value="AROM/DEHYDROQUINATE SYNTHASE"/>
    <property type="match status" value="1"/>
</dbReference>
<dbReference type="PANTHER" id="PTHR21090:SF5">
    <property type="entry name" value="PENTAFUNCTIONAL AROM POLYPEPTIDE"/>
    <property type="match status" value="1"/>
</dbReference>
<dbReference type="Pfam" id="PF00275">
    <property type="entry name" value="EPSP_synthase"/>
    <property type="match status" value="1"/>
</dbReference>
<dbReference type="PIRSF" id="PIRSF000505">
    <property type="entry name" value="EPSPS"/>
    <property type="match status" value="1"/>
</dbReference>
<dbReference type="SUPFAM" id="SSF55205">
    <property type="entry name" value="EPT/RTPC-like"/>
    <property type="match status" value="1"/>
</dbReference>
<dbReference type="PROSITE" id="PS00104">
    <property type="entry name" value="EPSP_SYNTHASE_1"/>
    <property type="match status" value="1"/>
</dbReference>
<dbReference type="PROSITE" id="PS00885">
    <property type="entry name" value="EPSP_SYNTHASE_2"/>
    <property type="match status" value="1"/>
</dbReference>
<sequence length="426" mass="46733">MDTIEIPALNRPVDATVEIPGSKSLTNRALLVAALAQGDSILENALFSEDSEYFAKCLEQLGIPITLNPHLAQIQLAGRGGEIPAKQADLFVGLSGTTARFISALVALGNGEYRLDGVPRMRERPMGDMLTVLETGGATVNFEGNSGFMPYTVYSQGFAGGNFCLKANQTSQQLSALLMIAPYAQQDTIFEVEGTLVSLSYIKMTCRLMADFGVEVIQIGDNQFQIKAGQRYQAQHYTVEPDASNASYFFAAAAVTGGRVRVKHLTKQSCQGDILWLNVLEQMGCQIKDSDDYTEVTGPKQLQGIDIDMNDISDLVQTLAAIAPFASSPITIRNVEHIRYKETDRIKAVVTELRRLGVQVEEFPDRLKIEPGPITPAEIETYHDHRMAMAFAVTGLKVPGIVIKDPGCTAKTFPDYFTRFFQMLEQ</sequence>
<comment type="function">
    <text evidence="1">Catalyzes the transfer of the enolpyruvyl moiety of phosphoenolpyruvate (PEP) to the 5-hydroxyl of shikimate-3-phosphate (S3P) to produce enolpyruvyl shikimate-3-phosphate and inorganic phosphate.</text>
</comment>
<comment type="catalytic activity">
    <reaction evidence="1">
        <text>3-phosphoshikimate + phosphoenolpyruvate = 5-O-(1-carboxyvinyl)-3-phosphoshikimate + phosphate</text>
        <dbReference type="Rhea" id="RHEA:21256"/>
        <dbReference type="ChEBI" id="CHEBI:43474"/>
        <dbReference type="ChEBI" id="CHEBI:57701"/>
        <dbReference type="ChEBI" id="CHEBI:58702"/>
        <dbReference type="ChEBI" id="CHEBI:145989"/>
        <dbReference type="EC" id="2.5.1.19"/>
    </reaction>
    <physiologicalReaction direction="left-to-right" evidence="1">
        <dbReference type="Rhea" id="RHEA:21257"/>
    </physiologicalReaction>
</comment>
<comment type="pathway">
    <text evidence="1">Metabolic intermediate biosynthesis; chorismate biosynthesis; chorismate from D-erythrose 4-phosphate and phosphoenolpyruvate: step 6/7.</text>
</comment>
<comment type="subunit">
    <text evidence="1">Monomer.</text>
</comment>
<comment type="subcellular location">
    <subcellularLocation>
        <location evidence="1">Cytoplasm</location>
    </subcellularLocation>
</comment>
<comment type="similarity">
    <text evidence="1">Belongs to the EPSP synthase family.</text>
</comment>
<protein>
    <recommendedName>
        <fullName evidence="1">3-phosphoshikimate 1-carboxyvinyltransferase</fullName>
        <ecNumber evidence="1">2.5.1.19</ecNumber>
    </recommendedName>
    <alternativeName>
        <fullName evidence="1">5-enolpyruvylshikimate-3-phosphate synthase</fullName>
        <shortName evidence="1">EPSP synthase</shortName>
        <shortName evidence="1">EPSPS</shortName>
    </alternativeName>
</protein>
<feature type="chain" id="PRO_1000099734" description="3-phosphoshikimate 1-carboxyvinyltransferase">
    <location>
        <begin position="1"/>
        <end position="426"/>
    </location>
</feature>
<feature type="active site" description="Proton acceptor" evidence="1">
    <location>
        <position position="314"/>
    </location>
</feature>
<feature type="binding site" evidence="1">
    <location>
        <position position="23"/>
    </location>
    <ligand>
        <name>3-phosphoshikimate</name>
        <dbReference type="ChEBI" id="CHEBI:145989"/>
    </ligand>
</feature>
<feature type="binding site" evidence="1">
    <location>
        <position position="23"/>
    </location>
    <ligand>
        <name>phosphoenolpyruvate</name>
        <dbReference type="ChEBI" id="CHEBI:58702"/>
    </ligand>
</feature>
<feature type="binding site" evidence="1">
    <location>
        <position position="24"/>
    </location>
    <ligand>
        <name>3-phosphoshikimate</name>
        <dbReference type="ChEBI" id="CHEBI:145989"/>
    </ligand>
</feature>
<feature type="binding site" evidence="1">
    <location>
        <position position="28"/>
    </location>
    <ligand>
        <name>3-phosphoshikimate</name>
        <dbReference type="ChEBI" id="CHEBI:145989"/>
    </ligand>
</feature>
<feature type="binding site" evidence="1">
    <location>
        <position position="96"/>
    </location>
    <ligand>
        <name>phosphoenolpyruvate</name>
        <dbReference type="ChEBI" id="CHEBI:58702"/>
    </ligand>
</feature>
<feature type="binding site" evidence="1">
    <location>
        <position position="124"/>
    </location>
    <ligand>
        <name>phosphoenolpyruvate</name>
        <dbReference type="ChEBI" id="CHEBI:58702"/>
    </ligand>
</feature>
<feature type="binding site" evidence="1">
    <location>
        <position position="170"/>
    </location>
    <ligand>
        <name>3-phosphoshikimate</name>
        <dbReference type="ChEBI" id="CHEBI:145989"/>
    </ligand>
</feature>
<feature type="binding site" evidence="1">
    <location>
        <position position="171"/>
    </location>
    <ligand>
        <name>3-phosphoshikimate</name>
        <dbReference type="ChEBI" id="CHEBI:145989"/>
    </ligand>
</feature>
<feature type="binding site" evidence="1">
    <location>
        <position position="172"/>
    </location>
    <ligand>
        <name>3-phosphoshikimate</name>
        <dbReference type="ChEBI" id="CHEBI:145989"/>
    </ligand>
</feature>
<feature type="binding site" evidence="1">
    <location>
        <position position="172"/>
    </location>
    <ligand>
        <name>phosphoenolpyruvate</name>
        <dbReference type="ChEBI" id="CHEBI:58702"/>
    </ligand>
</feature>
<feature type="binding site" evidence="1">
    <location>
        <position position="198"/>
    </location>
    <ligand>
        <name>3-phosphoshikimate</name>
        <dbReference type="ChEBI" id="CHEBI:145989"/>
    </ligand>
</feature>
<feature type="binding site" evidence="1">
    <location>
        <position position="314"/>
    </location>
    <ligand>
        <name>3-phosphoshikimate</name>
        <dbReference type="ChEBI" id="CHEBI:145989"/>
    </ligand>
</feature>
<feature type="binding site" evidence="1">
    <location>
        <position position="341"/>
    </location>
    <ligand>
        <name>3-phosphoshikimate</name>
        <dbReference type="ChEBI" id="CHEBI:145989"/>
    </ligand>
</feature>
<feature type="binding site" evidence="1">
    <location>
        <position position="345"/>
    </location>
    <ligand>
        <name>phosphoenolpyruvate</name>
        <dbReference type="ChEBI" id="CHEBI:58702"/>
    </ligand>
</feature>
<feature type="binding site" evidence="1">
    <location>
        <position position="386"/>
    </location>
    <ligand>
        <name>phosphoenolpyruvate</name>
        <dbReference type="ChEBI" id="CHEBI:58702"/>
    </ligand>
</feature>
<feature type="binding site" evidence="1">
    <location>
        <position position="411"/>
    </location>
    <ligand>
        <name>phosphoenolpyruvate</name>
        <dbReference type="ChEBI" id="CHEBI:58702"/>
    </ligand>
</feature>
<proteinExistence type="inferred from homology"/>
<accession>B2IYE4</accession>
<evidence type="ECO:0000255" key="1">
    <source>
        <dbReference type="HAMAP-Rule" id="MF_00210"/>
    </source>
</evidence>
<keyword id="KW-0028">Amino-acid biosynthesis</keyword>
<keyword id="KW-0057">Aromatic amino acid biosynthesis</keyword>
<keyword id="KW-0963">Cytoplasm</keyword>
<keyword id="KW-1185">Reference proteome</keyword>
<keyword id="KW-0808">Transferase</keyword>